<reference key="1">
    <citation type="journal article" date="2012" name="Phytochemistry">
        <title>Functional characterization of four sesquiterpene synthases from Ricinus communis (castor bean).</title>
        <authorList>
            <person name="Xie X."/>
            <person name="Kirby J."/>
            <person name="Keasling J.D."/>
        </authorList>
    </citation>
    <scope>NUCLEOTIDE SEQUENCE [MRNA]</scope>
    <scope>FUNCTION</scope>
</reference>
<reference key="2">
    <citation type="journal article" date="2010" name="Nat. Biotechnol.">
        <title>Draft genome sequence of the oilseed species Ricinus communis.</title>
        <authorList>
            <person name="Chan A.P."/>
            <person name="Crabtree J."/>
            <person name="Zhao Q."/>
            <person name="Lorenzi H."/>
            <person name="Orvis J."/>
            <person name="Puiu D."/>
            <person name="Melake-Berhan A."/>
            <person name="Jones K.M."/>
            <person name="Redman J."/>
            <person name="Chen G."/>
            <person name="Cahoon E.B."/>
            <person name="Gedil M."/>
            <person name="Stanke M."/>
            <person name="Haas B.J."/>
            <person name="Wortman J.R."/>
            <person name="Fraser-Liggett C.M."/>
            <person name="Ravel J."/>
            <person name="Rabinowicz P.D."/>
        </authorList>
    </citation>
    <scope>NUCLEOTIDE SEQUENCE [LARGE SCALE GENOMIC DNA]</scope>
    <source>
        <strain>cv. Hale</strain>
    </source>
</reference>
<feature type="chain" id="PRO_0000422208" description="Terpene synthase 10">
    <location>
        <begin position="1"/>
        <end position="551"/>
    </location>
</feature>
<feature type="short sequence motif" description="DDXXD motif">
    <location>
        <begin position="303"/>
        <end position="307"/>
    </location>
</feature>
<feature type="binding site" evidence="1">
    <location>
        <position position="303"/>
    </location>
    <ligand>
        <name>Mg(2+)</name>
        <dbReference type="ChEBI" id="CHEBI:18420"/>
        <label>1</label>
    </ligand>
</feature>
<feature type="binding site" evidence="1">
    <location>
        <position position="303"/>
    </location>
    <ligand>
        <name>Mg(2+)</name>
        <dbReference type="ChEBI" id="CHEBI:18420"/>
        <label>2</label>
    </ligand>
</feature>
<feature type="binding site" evidence="1">
    <location>
        <position position="307"/>
    </location>
    <ligand>
        <name>Mg(2+)</name>
        <dbReference type="ChEBI" id="CHEBI:18420"/>
        <label>1</label>
    </ligand>
</feature>
<feature type="binding site" evidence="1">
    <location>
        <position position="307"/>
    </location>
    <ligand>
        <name>Mg(2+)</name>
        <dbReference type="ChEBI" id="CHEBI:18420"/>
        <label>2</label>
    </ligand>
</feature>
<feature type="binding site" evidence="1">
    <location>
        <position position="455"/>
    </location>
    <ligand>
        <name>Mg(2+)</name>
        <dbReference type="ChEBI" id="CHEBI:18420"/>
        <label>3</label>
    </ligand>
</feature>
<feature type="sequence conflict" description="In Ref. 1; AEQ27769." evidence="3" ref="1">
    <original>F</original>
    <variation>L</variation>
    <location>
        <position position="65"/>
    </location>
</feature>
<sequence>MTDPIMSNETIIRRSANYRPPIWDFDFVQSLKSEFVGELNIKRIDKLKEDVKMMLNKTMAPSDQFELIDTLQRLGLAYHFGDEIKRIVKSIYNSHRNDNTWMKEDLHTIALQFRLLRQHGYNISQEIFDIFRDELGNFKECLHEDIEGMLSLYEASYLLEEGENILEVAREFAASCLKKYIQVNKDQLLSMIVSHSLEVPLHWRMPRLETRWFIDIYEKKQGMNPLLLELAKLDFNNVQATYHEDLKYVTSWWRNTGLGEKLSFARDRLMENFLWTVGVNFPPQFGYFRRISTKVNSLITVIDDIYDVYGTLDELQLFTNAVERWDVNAMDQLPEYMKLCFLALHNSINEMAYDALREQGFHIIPYLKKAWADLCKSYLVEAKWYYIGYTPTLQEYMDNAWISISAPVILVHAYFLEGSPITNEALKSLKEYPDIIQWSSMILRFADDLGTSSDELKRGDNPKSIQCYIYETGVSELKAREHIQYLIGETWKKINKEREYIDSPFSKIFIEVATNLARMAQCMYQHGDGHGIEDGETKDHVLSLLVKPIPM</sequence>
<name>TPS10_RICCO</name>
<protein>
    <recommendedName>
        <fullName>Terpene synthase 10</fullName>
        <shortName>RcSeTPS10</shortName>
        <ecNumber>4.2.3.-</ecNumber>
    </recommendedName>
</protein>
<proteinExistence type="evidence at transcript level"/>
<organism>
    <name type="scientific">Ricinus communis</name>
    <name type="common">Castor bean</name>
    <dbReference type="NCBI Taxonomy" id="3988"/>
    <lineage>
        <taxon>Eukaryota</taxon>
        <taxon>Viridiplantae</taxon>
        <taxon>Streptophyta</taxon>
        <taxon>Embryophyta</taxon>
        <taxon>Tracheophyta</taxon>
        <taxon>Spermatophyta</taxon>
        <taxon>Magnoliopsida</taxon>
        <taxon>eudicotyledons</taxon>
        <taxon>Gunneridae</taxon>
        <taxon>Pentapetalae</taxon>
        <taxon>rosids</taxon>
        <taxon>fabids</taxon>
        <taxon>Malpighiales</taxon>
        <taxon>Euphorbiaceae</taxon>
        <taxon>Acalyphoideae</taxon>
        <taxon>Acalypheae</taxon>
        <taxon>Ricinus</taxon>
    </lineage>
</organism>
<gene>
    <name type="primary">TPS10</name>
    <name type="ORF">RCOM_0766900</name>
</gene>
<accession>B9T536</accession>
<accession>G5CTA0</accession>
<comment type="function">
    <text evidence="2">Catalyzes the cyclization of farnesyl diphosphate to sesquiterpene olefins.</text>
</comment>
<comment type="cofactor">
    <cofactor evidence="1">
        <name>Mg(2+)</name>
        <dbReference type="ChEBI" id="CHEBI:18420"/>
    </cofactor>
    <text evidence="1">Binds 3 Mg(2+) ions per subunit.</text>
</comment>
<comment type="domain">
    <text evidence="1">The Asp-Asp-Xaa-Xaa-Asp/Glu (DDXXD/E) motif is important for the catalytic activity, presumably through binding to Mg(2+).</text>
</comment>
<comment type="similarity">
    <text evidence="3">Belongs to the terpene synthase family.</text>
</comment>
<dbReference type="EC" id="4.2.3.-"/>
<dbReference type="EMBL" id="JN315867">
    <property type="protein sequence ID" value="AEQ27769.1"/>
    <property type="molecule type" value="mRNA"/>
</dbReference>
<dbReference type="EMBL" id="EQ974507">
    <property type="protein sequence ID" value="EEF29028.1"/>
    <property type="molecule type" value="Genomic_DNA"/>
</dbReference>
<dbReference type="RefSeq" id="NP_001310631.1">
    <property type="nucleotide sequence ID" value="NM_001323702.1"/>
</dbReference>
<dbReference type="SMR" id="B9T536"/>
<dbReference type="FunCoup" id="B9T536">
    <property type="interactions" value="197"/>
</dbReference>
<dbReference type="STRING" id="3988.B9T536"/>
<dbReference type="GeneID" id="8261702"/>
<dbReference type="KEGG" id="rcu:8261702"/>
<dbReference type="eggNOG" id="ENOG502QUH3">
    <property type="taxonomic scope" value="Eukaryota"/>
</dbReference>
<dbReference type="InParanoid" id="B9T536"/>
<dbReference type="OrthoDB" id="825477at2759"/>
<dbReference type="Proteomes" id="UP000008311">
    <property type="component" value="Unassembled WGS sequence"/>
</dbReference>
<dbReference type="GO" id="GO:0000287">
    <property type="term" value="F:magnesium ion binding"/>
    <property type="evidence" value="ECO:0007669"/>
    <property type="project" value="InterPro"/>
</dbReference>
<dbReference type="GO" id="GO:0010334">
    <property type="term" value="F:sesquiterpene synthase activity"/>
    <property type="evidence" value="ECO:0000314"/>
    <property type="project" value="UniProtKB"/>
</dbReference>
<dbReference type="GO" id="GO:0016102">
    <property type="term" value="P:diterpenoid biosynthetic process"/>
    <property type="evidence" value="ECO:0007669"/>
    <property type="project" value="InterPro"/>
</dbReference>
<dbReference type="GO" id="GO:0051762">
    <property type="term" value="P:sesquiterpene biosynthetic process"/>
    <property type="evidence" value="ECO:0000314"/>
    <property type="project" value="UniProtKB"/>
</dbReference>
<dbReference type="CDD" id="cd00684">
    <property type="entry name" value="Terpene_cyclase_plant_C1"/>
    <property type="match status" value="1"/>
</dbReference>
<dbReference type="FunFam" id="1.10.600.10:FF:000007">
    <property type="entry name" value="Isoprene synthase, chloroplastic"/>
    <property type="match status" value="1"/>
</dbReference>
<dbReference type="FunFam" id="1.50.10.130:FF:000001">
    <property type="entry name" value="Isoprene synthase, chloroplastic"/>
    <property type="match status" value="1"/>
</dbReference>
<dbReference type="Gene3D" id="1.10.600.10">
    <property type="entry name" value="Farnesyl Diphosphate Synthase"/>
    <property type="match status" value="1"/>
</dbReference>
<dbReference type="Gene3D" id="1.50.10.130">
    <property type="entry name" value="Terpene synthase, N-terminal domain"/>
    <property type="match status" value="1"/>
</dbReference>
<dbReference type="InterPro" id="IPR008949">
    <property type="entry name" value="Isoprenoid_synthase_dom_sf"/>
</dbReference>
<dbReference type="InterPro" id="IPR034741">
    <property type="entry name" value="Terpene_cyclase-like_1_C"/>
</dbReference>
<dbReference type="InterPro" id="IPR044814">
    <property type="entry name" value="Terpene_cyclase_plant_C1"/>
</dbReference>
<dbReference type="InterPro" id="IPR001906">
    <property type="entry name" value="Terpene_synth_N"/>
</dbReference>
<dbReference type="InterPro" id="IPR036965">
    <property type="entry name" value="Terpene_synth_N_sf"/>
</dbReference>
<dbReference type="InterPro" id="IPR050148">
    <property type="entry name" value="Terpene_synthase-like"/>
</dbReference>
<dbReference type="InterPro" id="IPR005630">
    <property type="entry name" value="Terpene_synthase_metal-bd"/>
</dbReference>
<dbReference type="InterPro" id="IPR008930">
    <property type="entry name" value="Terpenoid_cyclase/PrenylTrfase"/>
</dbReference>
<dbReference type="PANTHER" id="PTHR31225">
    <property type="entry name" value="OS04G0344100 PROTEIN-RELATED"/>
    <property type="match status" value="1"/>
</dbReference>
<dbReference type="PANTHER" id="PTHR31225:SF9">
    <property type="entry name" value="TERPENE SYNTHASE 10"/>
    <property type="match status" value="1"/>
</dbReference>
<dbReference type="Pfam" id="PF01397">
    <property type="entry name" value="Terpene_synth"/>
    <property type="match status" value="1"/>
</dbReference>
<dbReference type="Pfam" id="PF03936">
    <property type="entry name" value="Terpene_synth_C"/>
    <property type="match status" value="1"/>
</dbReference>
<dbReference type="SFLD" id="SFLDG01019">
    <property type="entry name" value="Terpene_Cyclase_Like_1_C_Termi"/>
    <property type="match status" value="1"/>
</dbReference>
<dbReference type="SFLD" id="SFLDG01604">
    <property type="entry name" value="Terpene_Cyclase_Like_1_C_Termi"/>
    <property type="match status" value="1"/>
</dbReference>
<dbReference type="SFLD" id="SFLDG01014">
    <property type="entry name" value="Terpene_Cyclase_Like_1_N-term"/>
    <property type="match status" value="1"/>
</dbReference>
<dbReference type="SUPFAM" id="SSF48239">
    <property type="entry name" value="Terpenoid cyclases/Protein prenyltransferases"/>
    <property type="match status" value="1"/>
</dbReference>
<dbReference type="SUPFAM" id="SSF48576">
    <property type="entry name" value="Terpenoid synthases"/>
    <property type="match status" value="1"/>
</dbReference>
<keyword id="KW-0456">Lyase</keyword>
<keyword id="KW-0460">Magnesium</keyword>
<keyword id="KW-0479">Metal-binding</keyword>
<keyword id="KW-1185">Reference proteome</keyword>
<evidence type="ECO:0000250" key="1"/>
<evidence type="ECO:0000269" key="2">
    <source>
    </source>
</evidence>
<evidence type="ECO:0000305" key="3"/>